<dbReference type="EC" id="6.5.1.2" evidence="1"/>
<dbReference type="EMBL" id="CP000390">
    <property type="protein sequence ID" value="ABG63390.1"/>
    <property type="molecule type" value="Genomic_DNA"/>
</dbReference>
<dbReference type="SMR" id="Q11GT5"/>
<dbReference type="STRING" id="266779.Meso_1997"/>
<dbReference type="KEGG" id="mes:Meso_1997"/>
<dbReference type="eggNOG" id="COG0272">
    <property type="taxonomic scope" value="Bacteria"/>
</dbReference>
<dbReference type="HOGENOM" id="CLU_007764_2_0_5"/>
<dbReference type="OrthoDB" id="9759736at2"/>
<dbReference type="GO" id="GO:0005829">
    <property type="term" value="C:cytosol"/>
    <property type="evidence" value="ECO:0007669"/>
    <property type="project" value="TreeGrafter"/>
</dbReference>
<dbReference type="GO" id="GO:0003911">
    <property type="term" value="F:DNA ligase (NAD+) activity"/>
    <property type="evidence" value="ECO:0007669"/>
    <property type="project" value="UniProtKB-UniRule"/>
</dbReference>
<dbReference type="GO" id="GO:0046872">
    <property type="term" value="F:metal ion binding"/>
    <property type="evidence" value="ECO:0007669"/>
    <property type="project" value="UniProtKB-KW"/>
</dbReference>
<dbReference type="GO" id="GO:0006281">
    <property type="term" value="P:DNA repair"/>
    <property type="evidence" value="ECO:0007669"/>
    <property type="project" value="UniProtKB-KW"/>
</dbReference>
<dbReference type="GO" id="GO:0006260">
    <property type="term" value="P:DNA replication"/>
    <property type="evidence" value="ECO:0007669"/>
    <property type="project" value="UniProtKB-KW"/>
</dbReference>
<dbReference type="CDD" id="cd17748">
    <property type="entry name" value="BRCT_DNA_ligase_like"/>
    <property type="match status" value="1"/>
</dbReference>
<dbReference type="CDD" id="cd00114">
    <property type="entry name" value="LIGANc"/>
    <property type="match status" value="1"/>
</dbReference>
<dbReference type="FunFam" id="2.40.50.140:FF:000012">
    <property type="entry name" value="DNA ligase"/>
    <property type="match status" value="1"/>
</dbReference>
<dbReference type="FunFam" id="3.30.470.30:FF:000001">
    <property type="entry name" value="DNA ligase"/>
    <property type="match status" value="1"/>
</dbReference>
<dbReference type="Gene3D" id="6.20.10.30">
    <property type="match status" value="1"/>
</dbReference>
<dbReference type="Gene3D" id="1.10.150.20">
    <property type="entry name" value="5' to 3' exonuclease, C-terminal subdomain"/>
    <property type="match status" value="2"/>
</dbReference>
<dbReference type="Gene3D" id="3.40.50.10190">
    <property type="entry name" value="BRCT domain"/>
    <property type="match status" value="1"/>
</dbReference>
<dbReference type="Gene3D" id="3.30.470.30">
    <property type="entry name" value="DNA ligase/mRNA capping enzyme"/>
    <property type="match status" value="1"/>
</dbReference>
<dbReference type="Gene3D" id="1.10.287.610">
    <property type="entry name" value="Helix hairpin bin"/>
    <property type="match status" value="1"/>
</dbReference>
<dbReference type="Gene3D" id="2.40.50.140">
    <property type="entry name" value="Nucleic acid-binding proteins"/>
    <property type="match status" value="1"/>
</dbReference>
<dbReference type="HAMAP" id="MF_01588">
    <property type="entry name" value="DNA_ligase_A"/>
    <property type="match status" value="1"/>
</dbReference>
<dbReference type="InterPro" id="IPR001357">
    <property type="entry name" value="BRCT_dom"/>
</dbReference>
<dbReference type="InterPro" id="IPR036420">
    <property type="entry name" value="BRCT_dom_sf"/>
</dbReference>
<dbReference type="InterPro" id="IPR041663">
    <property type="entry name" value="DisA/LigA_HHH"/>
</dbReference>
<dbReference type="InterPro" id="IPR001679">
    <property type="entry name" value="DNA_ligase"/>
</dbReference>
<dbReference type="InterPro" id="IPR018239">
    <property type="entry name" value="DNA_ligase_AS"/>
</dbReference>
<dbReference type="InterPro" id="IPR033136">
    <property type="entry name" value="DNA_ligase_CS"/>
</dbReference>
<dbReference type="InterPro" id="IPR013839">
    <property type="entry name" value="DNAligase_adenylation"/>
</dbReference>
<dbReference type="InterPro" id="IPR013840">
    <property type="entry name" value="DNAligase_N"/>
</dbReference>
<dbReference type="InterPro" id="IPR012340">
    <property type="entry name" value="NA-bd_OB-fold"/>
</dbReference>
<dbReference type="InterPro" id="IPR004150">
    <property type="entry name" value="NAD_DNA_ligase_OB"/>
</dbReference>
<dbReference type="InterPro" id="IPR010994">
    <property type="entry name" value="RuvA_2-like"/>
</dbReference>
<dbReference type="NCBIfam" id="TIGR00575">
    <property type="entry name" value="dnlj"/>
    <property type="match status" value="1"/>
</dbReference>
<dbReference type="NCBIfam" id="NF005932">
    <property type="entry name" value="PRK07956.1"/>
    <property type="match status" value="1"/>
</dbReference>
<dbReference type="PANTHER" id="PTHR23389">
    <property type="entry name" value="CHROMOSOME TRANSMISSION FIDELITY FACTOR 18"/>
    <property type="match status" value="1"/>
</dbReference>
<dbReference type="PANTHER" id="PTHR23389:SF9">
    <property type="entry name" value="DNA LIGASE"/>
    <property type="match status" value="1"/>
</dbReference>
<dbReference type="Pfam" id="PF00533">
    <property type="entry name" value="BRCT"/>
    <property type="match status" value="1"/>
</dbReference>
<dbReference type="Pfam" id="PF01653">
    <property type="entry name" value="DNA_ligase_aden"/>
    <property type="match status" value="1"/>
</dbReference>
<dbReference type="Pfam" id="PF03120">
    <property type="entry name" value="DNA_ligase_OB"/>
    <property type="match status" value="1"/>
</dbReference>
<dbReference type="Pfam" id="PF12826">
    <property type="entry name" value="HHH_2"/>
    <property type="match status" value="1"/>
</dbReference>
<dbReference type="PIRSF" id="PIRSF001604">
    <property type="entry name" value="LigA"/>
    <property type="match status" value="1"/>
</dbReference>
<dbReference type="SMART" id="SM00292">
    <property type="entry name" value="BRCT"/>
    <property type="match status" value="1"/>
</dbReference>
<dbReference type="SMART" id="SM00532">
    <property type="entry name" value="LIGANc"/>
    <property type="match status" value="1"/>
</dbReference>
<dbReference type="SUPFAM" id="SSF52113">
    <property type="entry name" value="BRCT domain"/>
    <property type="match status" value="1"/>
</dbReference>
<dbReference type="SUPFAM" id="SSF56091">
    <property type="entry name" value="DNA ligase/mRNA capping enzyme, catalytic domain"/>
    <property type="match status" value="1"/>
</dbReference>
<dbReference type="SUPFAM" id="SSF50249">
    <property type="entry name" value="Nucleic acid-binding proteins"/>
    <property type="match status" value="1"/>
</dbReference>
<dbReference type="SUPFAM" id="SSF47781">
    <property type="entry name" value="RuvA domain 2-like"/>
    <property type="match status" value="1"/>
</dbReference>
<dbReference type="PROSITE" id="PS50172">
    <property type="entry name" value="BRCT"/>
    <property type="match status" value="1"/>
</dbReference>
<dbReference type="PROSITE" id="PS01055">
    <property type="entry name" value="DNA_LIGASE_N1"/>
    <property type="match status" value="1"/>
</dbReference>
<dbReference type="PROSITE" id="PS01056">
    <property type="entry name" value="DNA_LIGASE_N2"/>
    <property type="match status" value="1"/>
</dbReference>
<organism>
    <name type="scientific">Chelativorans sp. (strain BNC1)</name>
    <dbReference type="NCBI Taxonomy" id="266779"/>
    <lineage>
        <taxon>Bacteria</taxon>
        <taxon>Pseudomonadati</taxon>
        <taxon>Pseudomonadota</taxon>
        <taxon>Alphaproteobacteria</taxon>
        <taxon>Hyphomicrobiales</taxon>
        <taxon>Phyllobacteriaceae</taxon>
        <taxon>Chelativorans</taxon>
    </lineage>
</organism>
<evidence type="ECO:0000255" key="1">
    <source>
        <dbReference type="HAMAP-Rule" id="MF_01588"/>
    </source>
</evidence>
<protein>
    <recommendedName>
        <fullName evidence="1">DNA ligase</fullName>
        <ecNumber evidence="1">6.5.1.2</ecNumber>
    </recommendedName>
    <alternativeName>
        <fullName evidence="1">Polydeoxyribonucleotide synthase [NAD(+)]</fullName>
    </alternativeName>
</protein>
<accession>Q11GT5</accession>
<feature type="chain" id="PRO_0000313305" description="DNA ligase">
    <location>
        <begin position="1"/>
        <end position="703"/>
    </location>
</feature>
<feature type="domain" description="BRCT" evidence="1">
    <location>
        <begin position="625"/>
        <end position="703"/>
    </location>
</feature>
<feature type="active site" description="N6-AMP-lysine intermediate" evidence="1">
    <location>
        <position position="129"/>
    </location>
</feature>
<feature type="binding site" evidence="1">
    <location>
        <begin position="44"/>
        <end position="48"/>
    </location>
    <ligand>
        <name>NAD(+)</name>
        <dbReference type="ChEBI" id="CHEBI:57540"/>
    </ligand>
</feature>
<feature type="binding site" evidence="1">
    <location>
        <begin position="93"/>
        <end position="94"/>
    </location>
    <ligand>
        <name>NAD(+)</name>
        <dbReference type="ChEBI" id="CHEBI:57540"/>
    </ligand>
</feature>
<feature type="binding site" evidence="1">
    <location>
        <position position="127"/>
    </location>
    <ligand>
        <name>NAD(+)</name>
        <dbReference type="ChEBI" id="CHEBI:57540"/>
    </ligand>
</feature>
<feature type="binding site" evidence="1">
    <location>
        <position position="150"/>
    </location>
    <ligand>
        <name>NAD(+)</name>
        <dbReference type="ChEBI" id="CHEBI:57540"/>
    </ligand>
</feature>
<feature type="binding site" evidence="1">
    <location>
        <position position="186"/>
    </location>
    <ligand>
        <name>NAD(+)</name>
        <dbReference type="ChEBI" id="CHEBI:57540"/>
    </ligand>
</feature>
<feature type="binding site" evidence="1">
    <location>
        <position position="302"/>
    </location>
    <ligand>
        <name>NAD(+)</name>
        <dbReference type="ChEBI" id="CHEBI:57540"/>
    </ligand>
</feature>
<feature type="binding site" evidence="1">
    <location>
        <position position="326"/>
    </location>
    <ligand>
        <name>NAD(+)</name>
        <dbReference type="ChEBI" id="CHEBI:57540"/>
    </ligand>
</feature>
<feature type="binding site" evidence="1">
    <location>
        <position position="420"/>
    </location>
    <ligand>
        <name>Zn(2+)</name>
        <dbReference type="ChEBI" id="CHEBI:29105"/>
    </ligand>
</feature>
<feature type="binding site" evidence="1">
    <location>
        <position position="422"/>
    </location>
    <ligand>
        <name>Zn(2+)</name>
        <dbReference type="ChEBI" id="CHEBI:29105"/>
    </ligand>
</feature>
<feature type="binding site" evidence="1">
    <location>
        <position position="444"/>
    </location>
    <ligand>
        <name>Zn(2+)</name>
        <dbReference type="ChEBI" id="CHEBI:29105"/>
    </ligand>
</feature>
<feature type="binding site" evidence="1">
    <location>
        <position position="450"/>
    </location>
    <ligand>
        <name>Zn(2+)</name>
        <dbReference type="ChEBI" id="CHEBI:29105"/>
    </ligand>
</feature>
<comment type="function">
    <text evidence="1">DNA ligase that catalyzes the formation of phosphodiester linkages between 5'-phosphoryl and 3'-hydroxyl groups in double-stranded DNA using NAD as a coenzyme and as the energy source for the reaction. It is essential for DNA replication and repair of damaged DNA.</text>
</comment>
<comment type="catalytic activity">
    <reaction evidence="1">
        <text>NAD(+) + (deoxyribonucleotide)n-3'-hydroxyl + 5'-phospho-(deoxyribonucleotide)m = (deoxyribonucleotide)n+m + AMP + beta-nicotinamide D-nucleotide.</text>
        <dbReference type="EC" id="6.5.1.2"/>
    </reaction>
</comment>
<comment type="cofactor">
    <cofactor evidence="1">
        <name>Mg(2+)</name>
        <dbReference type="ChEBI" id="CHEBI:18420"/>
    </cofactor>
    <cofactor evidence="1">
        <name>Mn(2+)</name>
        <dbReference type="ChEBI" id="CHEBI:29035"/>
    </cofactor>
</comment>
<comment type="similarity">
    <text evidence="1">Belongs to the NAD-dependent DNA ligase family. LigA subfamily.</text>
</comment>
<proteinExistence type="inferred from homology"/>
<gene>
    <name evidence="1" type="primary">ligA</name>
    <name type="ordered locus">Meso_1997</name>
</gene>
<name>DNLJ_CHESB</name>
<reference key="1">
    <citation type="submission" date="2006-06" db="EMBL/GenBank/DDBJ databases">
        <title>Complete sequence of chromosome of Mesorhizobium sp. BNC1.</title>
        <authorList>
            <consortium name="US DOE Joint Genome Institute"/>
            <person name="Copeland A."/>
            <person name="Lucas S."/>
            <person name="Lapidus A."/>
            <person name="Barry K."/>
            <person name="Detter J.C."/>
            <person name="Glavina del Rio T."/>
            <person name="Hammon N."/>
            <person name="Israni S."/>
            <person name="Dalin E."/>
            <person name="Tice H."/>
            <person name="Pitluck S."/>
            <person name="Chertkov O."/>
            <person name="Brettin T."/>
            <person name="Bruce D."/>
            <person name="Han C."/>
            <person name="Tapia R."/>
            <person name="Gilna P."/>
            <person name="Schmutz J."/>
            <person name="Larimer F."/>
            <person name="Land M."/>
            <person name="Hauser L."/>
            <person name="Kyrpides N."/>
            <person name="Mikhailova N."/>
            <person name="Richardson P."/>
        </authorList>
    </citation>
    <scope>NUCLEOTIDE SEQUENCE [LARGE SCALE GENOMIC DNA]</scope>
    <source>
        <strain>BNC1</strain>
    </source>
</reference>
<sequence>MTTARIPVDELTEEQAKDELARLAQEIGRHDRLYYSEDAPEVSDAEYDALRRRNLAIEQAFPNLIRADSPSKRIGAPAVEKFEKVRHKVPMLSLDNAFTDDDVVDFVARVRRFLKMEPHAPIAMTAEPKIDGLSLSIRYENGRLVSAATRGDGQVGENVTANARAVADIPNVLSGDFPEILEVRGEVYMTHRDFLALNERQRAEGKQTYVNPRNTAAGSLRQLDASITAARPLKFFAYAWGEVSEMPSQTQMGMVEALKSYGFRTNKLMCLCETARELLEHYHAIEERRATLGYDIDGVVYKVNDLALQQRLGYVSRSPRWAIAHKFAAEKAFTILRDIDIQVGRTGALTPVARLEPVTVGGVVVTNATLHNAEEIERLGIKIGDTVQVQRAGDVIPQILGYAEDRRPADAKEFVFPSVCPCELKTPVVRDSTAGGGEGVVRRCSGEFACPFQRIEHLRLFVSRRAFDIEGLGEKQIEFFFRDPDLPVKSPADIFTLAERDAQNIKKLKDKEGWGTVSAGNLFAAIEAKRTIPLDRMIYGLGIRHVGERTAVTLARGYGSWKAFHDSALAIAGGDLSAREEMDALEDIGDAVIDAIATYFAEEHNCRLVEALAAQVNVLEAERPVADSPVAGKTIVFTGALERMSRDEAKDMAERLGAKVAGSVSSKTDLVVAGPGAGSKLKKAAELGIEVIDEDMWFQRIGA</sequence>
<keyword id="KW-0227">DNA damage</keyword>
<keyword id="KW-0234">DNA repair</keyword>
<keyword id="KW-0235">DNA replication</keyword>
<keyword id="KW-0436">Ligase</keyword>
<keyword id="KW-0460">Magnesium</keyword>
<keyword id="KW-0464">Manganese</keyword>
<keyword id="KW-0479">Metal-binding</keyword>
<keyword id="KW-0520">NAD</keyword>
<keyword id="KW-0862">Zinc</keyword>